<gene>
    <name evidence="1" type="primary">rnf168</name>
    <name type="ORF">zgc:64185</name>
</gene>
<sequence>MPPVSEVDRGPVEESSGGLKRSDCVCPVCLEIFLEPVTLPCMHTFCKPCFLETVDKSNMCCPLCRKRVSTWARLNSRNKTLVNMELWRRIQDAFPSQCERRVQGIDDDEEAVMIPKPRVCQPGELRKEYEDQISKLVEEKRALEEAERRASEEYIQRLLAEEEERLEEERRRREEQQLENDEKLARLLSLELNSGPASESTCNIKPAEATPAKKKPSVGDIEKFLRPVPHRQPSSSDSSPDSSLMANKENILSPPKPLSALSAEDCGKLTVHMLECNGKPSTSSFNPSTSEHTFVFNTPKSSSVKRKSSEIELQSEVDLHSKRPCALLRFDSSSEDSPFLSEVAVHEEALRSRWQQEEEDRRLALRIQKELDRENSVDRRKGSADSYQLRQKNTSVSTTTSPDVEGTKKGSNTTTAKNCTGRRGEEKTEKRLSGTTPGKRPGVKTPVSSTAVSSTVKKGTKQTTLTEMFPNMGS</sequence>
<reference key="1">
    <citation type="submission" date="2003-06" db="EMBL/GenBank/DDBJ databases">
        <authorList>
            <consortium name="NIH - Zebrafish Gene Collection (ZGC) project"/>
        </authorList>
    </citation>
    <scope>NUCLEOTIDE SEQUENCE [LARGE SCALE MRNA]</scope>
    <source>
        <tissue>Embryo</tissue>
    </source>
</reference>
<reference key="2">
    <citation type="journal article" date="2013" name="Nature">
        <title>The zebrafish reference genome sequence and its relationship to the human genome.</title>
        <authorList>
            <person name="Howe K."/>
            <person name="Clark M.D."/>
            <person name="Torroja C.F."/>
            <person name="Torrance J."/>
            <person name="Berthelot C."/>
            <person name="Muffato M."/>
            <person name="Collins J.E."/>
            <person name="Humphray S."/>
            <person name="McLaren K."/>
            <person name="Matthews L."/>
            <person name="McLaren S."/>
            <person name="Sealy I."/>
            <person name="Caccamo M."/>
            <person name="Churcher C."/>
            <person name="Scott C."/>
            <person name="Barrett J.C."/>
            <person name="Koch R."/>
            <person name="Rauch G.J."/>
            <person name="White S."/>
            <person name="Chow W."/>
            <person name="Kilian B."/>
            <person name="Quintais L.T."/>
            <person name="Guerra-Assuncao J.A."/>
            <person name="Zhou Y."/>
            <person name="Gu Y."/>
            <person name="Yen J."/>
            <person name="Vogel J.H."/>
            <person name="Eyre T."/>
            <person name="Redmond S."/>
            <person name="Banerjee R."/>
            <person name="Chi J."/>
            <person name="Fu B."/>
            <person name="Langley E."/>
            <person name="Maguire S.F."/>
            <person name="Laird G.K."/>
            <person name="Lloyd D."/>
            <person name="Kenyon E."/>
            <person name="Donaldson S."/>
            <person name="Sehra H."/>
            <person name="Almeida-King J."/>
            <person name="Loveland J."/>
            <person name="Trevanion S."/>
            <person name="Jones M."/>
            <person name="Quail M."/>
            <person name="Willey D."/>
            <person name="Hunt A."/>
            <person name="Burton J."/>
            <person name="Sims S."/>
            <person name="McLay K."/>
            <person name="Plumb B."/>
            <person name="Davis J."/>
            <person name="Clee C."/>
            <person name="Oliver K."/>
            <person name="Clark R."/>
            <person name="Riddle C."/>
            <person name="Elliot D."/>
            <person name="Threadgold G."/>
            <person name="Harden G."/>
            <person name="Ware D."/>
            <person name="Begum S."/>
            <person name="Mortimore B."/>
            <person name="Kerry G."/>
            <person name="Heath P."/>
            <person name="Phillimore B."/>
            <person name="Tracey A."/>
            <person name="Corby N."/>
            <person name="Dunn M."/>
            <person name="Johnson C."/>
            <person name="Wood J."/>
            <person name="Clark S."/>
            <person name="Pelan S."/>
            <person name="Griffiths G."/>
            <person name="Smith M."/>
            <person name="Glithero R."/>
            <person name="Howden P."/>
            <person name="Barker N."/>
            <person name="Lloyd C."/>
            <person name="Stevens C."/>
            <person name="Harley J."/>
            <person name="Holt K."/>
            <person name="Panagiotidis G."/>
            <person name="Lovell J."/>
            <person name="Beasley H."/>
            <person name="Henderson C."/>
            <person name="Gordon D."/>
            <person name="Auger K."/>
            <person name="Wright D."/>
            <person name="Collins J."/>
            <person name="Raisen C."/>
            <person name="Dyer L."/>
            <person name="Leung K."/>
            <person name="Robertson L."/>
            <person name="Ambridge K."/>
            <person name="Leongamornlert D."/>
            <person name="McGuire S."/>
            <person name="Gilderthorp R."/>
            <person name="Griffiths C."/>
            <person name="Manthravadi D."/>
            <person name="Nichol S."/>
            <person name="Barker G."/>
            <person name="Whitehead S."/>
            <person name="Kay M."/>
            <person name="Brown J."/>
            <person name="Murnane C."/>
            <person name="Gray E."/>
            <person name="Humphries M."/>
            <person name="Sycamore N."/>
            <person name="Barker D."/>
            <person name="Saunders D."/>
            <person name="Wallis J."/>
            <person name="Babbage A."/>
            <person name="Hammond S."/>
            <person name="Mashreghi-Mohammadi M."/>
            <person name="Barr L."/>
            <person name="Martin S."/>
            <person name="Wray P."/>
            <person name="Ellington A."/>
            <person name="Matthews N."/>
            <person name="Ellwood M."/>
            <person name="Woodmansey R."/>
            <person name="Clark G."/>
            <person name="Cooper J."/>
            <person name="Tromans A."/>
            <person name="Grafham D."/>
            <person name="Skuce C."/>
            <person name="Pandian R."/>
            <person name="Andrews R."/>
            <person name="Harrison E."/>
            <person name="Kimberley A."/>
            <person name="Garnett J."/>
            <person name="Fosker N."/>
            <person name="Hall R."/>
            <person name="Garner P."/>
            <person name="Kelly D."/>
            <person name="Bird C."/>
            <person name="Palmer S."/>
            <person name="Gehring I."/>
            <person name="Berger A."/>
            <person name="Dooley C.M."/>
            <person name="Ersan-Urun Z."/>
            <person name="Eser C."/>
            <person name="Geiger H."/>
            <person name="Geisler M."/>
            <person name="Karotki L."/>
            <person name="Kirn A."/>
            <person name="Konantz J."/>
            <person name="Konantz M."/>
            <person name="Oberlander M."/>
            <person name="Rudolph-Geiger S."/>
            <person name="Teucke M."/>
            <person name="Lanz C."/>
            <person name="Raddatz G."/>
            <person name="Osoegawa K."/>
            <person name="Zhu B."/>
            <person name="Rapp A."/>
            <person name="Widaa S."/>
            <person name="Langford C."/>
            <person name="Yang F."/>
            <person name="Schuster S.C."/>
            <person name="Carter N.P."/>
            <person name="Harrow J."/>
            <person name="Ning Z."/>
            <person name="Herrero J."/>
            <person name="Searle S.M."/>
            <person name="Enright A."/>
            <person name="Geisler R."/>
            <person name="Plasterk R.H."/>
            <person name="Lee C."/>
            <person name="Westerfield M."/>
            <person name="de Jong P.J."/>
            <person name="Zon L.I."/>
            <person name="Postlethwait J.H."/>
            <person name="Nusslein-Volhard C."/>
            <person name="Hubbard T.J."/>
            <person name="Roest Crollius H."/>
            <person name="Rogers J."/>
            <person name="Stemple D.L."/>
        </authorList>
    </citation>
    <scope>NOMENCLATURE</scope>
    <source>
        <strain>Tuebingen</strain>
    </source>
</reference>
<dbReference type="EC" id="2.3.2.27" evidence="1"/>
<dbReference type="EMBL" id="BC053301">
    <property type="protein sequence ID" value="AAH53301.1"/>
    <property type="molecule type" value="mRNA"/>
</dbReference>
<dbReference type="RefSeq" id="NP_956149.1">
    <property type="nucleotide sequence ID" value="NM_199855.1"/>
</dbReference>
<dbReference type="SMR" id="Q7T308"/>
<dbReference type="FunCoup" id="Q7T308">
    <property type="interactions" value="1039"/>
</dbReference>
<dbReference type="STRING" id="7955.ENSDARP00000154968"/>
<dbReference type="PaxDb" id="7955-ENSDARP00000037364"/>
<dbReference type="GeneID" id="334081"/>
<dbReference type="KEGG" id="dre:334081"/>
<dbReference type="AGR" id="ZFIN:ZDB-GENE-030131-6013"/>
<dbReference type="CTD" id="165918"/>
<dbReference type="ZFIN" id="ZDB-GENE-030131-6013">
    <property type="gene designation" value="rnf168"/>
</dbReference>
<dbReference type="eggNOG" id="KOG4159">
    <property type="taxonomic scope" value="Eukaryota"/>
</dbReference>
<dbReference type="InParanoid" id="Q7T308"/>
<dbReference type="OrthoDB" id="426657at2759"/>
<dbReference type="PhylomeDB" id="Q7T308"/>
<dbReference type="Reactome" id="R-DRE-3108214">
    <property type="pathway name" value="SUMOylation of DNA damage response and repair proteins"/>
</dbReference>
<dbReference type="UniPathway" id="UPA00143"/>
<dbReference type="PRO" id="PR:Q7T308"/>
<dbReference type="Proteomes" id="UP000000437">
    <property type="component" value="Chromosome 15"/>
</dbReference>
<dbReference type="GO" id="GO:0005634">
    <property type="term" value="C:nucleus"/>
    <property type="evidence" value="ECO:0000250"/>
    <property type="project" value="UniProtKB"/>
</dbReference>
<dbReference type="GO" id="GO:0035861">
    <property type="term" value="C:site of double-strand break"/>
    <property type="evidence" value="ECO:0000250"/>
    <property type="project" value="UniProtKB"/>
</dbReference>
<dbReference type="GO" id="GO:0000151">
    <property type="term" value="C:ubiquitin ligase complex"/>
    <property type="evidence" value="ECO:0000250"/>
    <property type="project" value="UniProtKB"/>
</dbReference>
<dbReference type="GO" id="GO:0003682">
    <property type="term" value="F:chromatin binding"/>
    <property type="evidence" value="ECO:0000250"/>
    <property type="project" value="UniProtKB"/>
</dbReference>
<dbReference type="GO" id="GO:0042393">
    <property type="term" value="F:histone binding"/>
    <property type="evidence" value="ECO:0000250"/>
    <property type="project" value="UniProtKB"/>
</dbReference>
<dbReference type="GO" id="GO:0070530">
    <property type="term" value="F:K63-linked polyubiquitin modification-dependent protein binding"/>
    <property type="evidence" value="ECO:0000250"/>
    <property type="project" value="UniProtKB"/>
</dbReference>
<dbReference type="GO" id="GO:0031491">
    <property type="term" value="F:nucleosome binding"/>
    <property type="evidence" value="ECO:0000318"/>
    <property type="project" value="GO_Central"/>
</dbReference>
<dbReference type="GO" id="GO:0043130">
    <property type="term" value="F:ubiquitin binding"/>
    <property type="evidence" value="ECO:0000250"/>
    <property type="project" value="UniProtKB"/>
</dbReference>
<dbReference type="GO" id="GO:0004842">
    <property type="term" value="F:ubiquitin-protein transferase activity"/>
    <property type="evidence" value="ECO:0000250"/>
    <property type="project" value="UniProtKB"/>
</dbReference>
<dbReference type="GO" id="GO:0008270">
    <property type="term" value="F:zinc ion binding"/>
    <property type="evidence" value="ECO:0007669"/>
    <property type="project" value="UniProtKB-KW"/>
</dbReference>
<dbReference type="GO" id="GO:0006974">
    <property type="term" value="P:DNA damage response"/>
    <property type="evidence" value="ECO:0000250"/>
    <property type="project" value="UniProtKB"/>
</dbReference>
<dbReference type="GO" id="GO:0140861">
    <property type="term" value="P:DNA repair-dependent chromatin remodeling"/>
    <property type="evidence" value="ECO:0000250"/>
    <property type="project" value="UniProtKB"/>
</dbReference>
<dbReference type="GO" id="GO:0006302">
    <property type="term" value="P:double-strand break repair"/>
    <property type="evidence" value="ECO:0000250"/>
    <property type="project" value="UniProtKB"/>
</dbReference>
<dbReference type="GO" id="GO:0045190">
    <property type="term" value="P:isotype switching"/>
    <property type="evidence" value="ECO:0000250"/>
    <property type="project" value="UniProtKB"/>
</dbReference>
<dbReference type="GO" id="GO:0034244">
    <property type="term" value="P:negative regulation of transcription elongation by RNA polymerase II"/>
    <property type="evidence" value="ECO:0000250"/>
    <property type="project" value="UniProtKB"/>
</dbReference>
<dbReference type="GO" id="GO:0045739">
    <property type="term" value="P:positive regulation of DNA repair"/>
    <property type="evidence" value="ECO:0000250"/>
    <property type="project" value="UniProtKB"/>
</dbReference>
<dbReference type="GO" id="GO:0070534">
    <property type="term" value="P:protein K63-linked ubiquitination"/>
    <property type="evidence" value="ECO:0000250"/>
    <property type="project" value="UniProtKB"/>
</dbReference>
<dbReference type="GO" id="GO:0016567">
    <property type="term" value="P:protein ubiquitination"/>
    <property type="evidence" value="ECO:0000250"/>
    <property type="project" value="UniProtKB"/>
</dbReference>
<dbReference type="GO" id="GO:0010212">
    <property type="term" value="P:response to ionizing radiation"/>
    <property type="evidence" value="ECO:0000250"/>
    <property type="project" value="UniProtKB"/>
</dbReference>
<dbReference type="GO" id="GO:0006511">
    <property type="term" value="P:ubiquitin-dependent protein catabolic process"/>
    <property type="evidence" value="ECO:0000250"/>
    <property type="project" value="UniProtKB"/>
</dbReference>
<dbReference type="CDD" id="cd21952">
    <property type="entry name" value="MIU2_RNF168"/>
    <property type="match status" value="1"/>
</dbReference>
<dbReference type="CDD" id="cd16550">
    <property type="entry name" value="RING-HC_RNF168"/>
    <property type="match status" value="1"/>
</dbReference>
<dbReference type="CDD" id="cd22265">
    <property type="entry name" value="UDM1_RNF168"/>
    <property type="match status" value="1"/>
</dbReference>
<dbReference type="FunFam" id="3.30.40.10:FF:000466">
    <property type="entry name" value="E3 ubiquitin-protein ligase RNF168"/>
    <property type="match status" value="1"/>
</dbReference>
<dbReference type="Gene3D" id="3.30.40.10">
    <property type="entry name" value="Zinc/RING finger domain, C3HC4 (zinc finger)"/>
    <property type="match status" value="1"/>
</dbReference>
<dbReference type="HAMAP" id="MF_03066">
    <property type="entry name" value="RNF168"/>
    <property type="match status" value="1"/>
</dbReference>
<dbReference type="InterPro" id="IPR034725">
    <property type="entry name" value="RNF168"/>
</dbReference>
<dbReference type="InterPro" id="IPR051657">
    <property type="entry name" value="RNF168/RNF169_E3_ubiq-ligase"/>
</dbReference>
<dbReference type="InterPro" id="IPR001841">
    <property type="entry name" value="Znf_RING"/>
</dbReference>
<dbReference type="InterPro" id="IPR013083">
    <property type="entry name" value="Znf_RING/FYVE/PHD"/>
</dbReference>
<dbReference type="PANTHER" id="PTHR23328:SF1">
    <property type="entry name" value="E3 UBIQUITIN-PROTEIN LIGASE RNF168"/>
    <property type="match status" value="1"/>
</dbReference>
<dbReference type="PANTHER" id="PTHR23328">
    <property type="entry name" value="RING-TYPE DOMAIN-CONTAINING PROTEIN"/>
    <property type="match status" value="1"/>
</dbReference>
<dbReference type="Pfam" id="PF13923">
    <property type="entry name" value="zf-C3HC4_2"/>
    <property type="match status" value="1"/>
</dbReference>
<dbReference type="SMART" id="SM00184">
    <property type="entry name" value="RING"/>
    <property type="match status" value="1"/>
</dbReference>
<dbReference type="SUPFAM" id="SSF57850">
    <property type="entry name" value="RING/U-box"/>
    <property type="match status" value="1"/>
</dbReference>
<dbReference type="PROSITE" id="PS50089">
    <property type="entry name" value="ZF_RING_2"/>
    <property type="match status" value="1"/>
</dbReference>
<proteinExistence type="evidence at transcript level"/>
<evidence type="ECO:0000255" key="1">
    <source>
        <dbReference type="HAMAP-Rule" id="MF_03066"/>
    </source>
</evidence>
<evidence type="ECO:0000256" key="2">
    <source>
        <dbReference type="SAM" id="MobiDB-lite"/>
    </source>
</evidence>
<evidence type="ECO:0000303" key="3">
    <source>
    </source>
</evidence>
<evidence type="ECO:0000305" key="4"/>
<keyword id="KW-0156">Chromatin regulator</keyword>
<keyword id="KW-0227">DNA damage</keyword>
<keyword id="KW-0234">DNA repair</keyword>
<keyword id="KW-0479">Metal-binding</keyword>
<keyword id="KW-0539">Nucleus</keyword>
<keyword id="KW-1185">Reference proteome</keyword>
<keyword id="KW-0808">Transferase</keyword>
<keyword id="KW-0833">Ubl conjugation pathway</keyword>
<keyword id="KW-0862">Zinc</keyword>
<keyword id="KW-0863">Zinc-finger</keyword>
<protein>
    <recommendedName>
        <fullName evidence="1">E3 ubiquitin-protein ligase rnf168</fullName>
        <ecNumber evidence="1">2.3.2.27</ecNumber>
    </recommendedName>
    <alternativeName>
        <fullName evidence="1">RING finger protein 168</fullName>
    </alternativeName>
    <alternativeName>
        <fullName>RING-type E3 ubiquitin transferase rnf168</fullName>
    </alternativeName>
</protein>
<accession>Q7T308</accession>
<name>RN168_DANRE</name>
<organism>
    <name type="scientific">Danio rerio</name>
    <name type="common">Zebrafish</name>
    <name type="synonym">Brachydanio rerio</name>
    <dbReference type="NCBI Taxonomy" id="7955"/>
    <lineage>
        <taxon>Eukaryota</taxon>
        <taxon>Metazoa</taxon>
        <taxon>Chordata</taxon>
        <taxon>Craniata</taxon>
        <taxon>Vertebrata</taxon>
        <taxon>Euteleostomi</taxon>
        <taxon>Actinopterygii</taxon>
        <taxon>Neopterygii</taxon>
        <taxon>Teleostei</taxon>
        <taxon>Ostariophysi</taxon>
        <taxon>Cypriniformes</taxon>
        <taxon>Danionidae</taxon>
        <taxon>Danioninae</taxon>
        <taxon>Danio</taxon>
    </lineage>
</organism>
<feature type="chain" id="PRO_0000367283" description="E3 ubiquitin-protein ligase rnf168">
    <location>
        <begin position="1"/>
        <end position="474"/>
    </location>
</feature>
<feature type="zinc finger region" description="RING-type" evidence="1">
    <location>
        <begin position="26"/>
        <end position="65"/>
    </location>
</feature>
<feature type="region of interest" description="Disordered" evidence="2">
    <location>
        <begin position="1"/>
        <end position="20"/>
    </location>
</feature>
<feature type="region of interest" description="Disordered" evidence="2">
    <location>
        <begin position="192"/>
        <end position="259"/>
    </location>
</feature>
<feature type="region of interest" description="Disordered" evidence="2">
    <location>
        <begin position="367"/>
        <end position="474"/>
    </location>
</feature>
<feature type="short sequence motif" description="LR motif 1" evidence="1">
    <location>
        <begin position="119"/>
        <end position="137"/>
    </location>
</feature>
<feature type="short sequence motif" description="UMI motif" evidence="1">
    <location>
        <begin position="152"/>
        <end position="160"/>
    </location>
</feature>
<feature type="short sequence motif" description="MIU motif 1" evidence="1">
    <location>
        <begin position="174"/>
        <end position="195"/>
    </location>
</feature>
<feature type="short sequence motif" description="MIU motif 2" evidence="1">
    <location>
        <begin position="353"/>
        <end position="376"/>
    </location>
</feature>
<feature type="short sequence motif" description="LR motif 2" evidence="1">
    <location>
        <begin position="379"/>
        <end position="390"/>
    </location>
</feature>
<feature type="compositionally biased region" description="Basic and acidic residues" evidence="2">
    <location>
        <begin position="1"/>
        <end position="12"/>
    </location>
</feature>
<feature type="compositionally biased region" description="Polar residues" evidence="2">
    <location>
        <begin position="192"/>
        <end position="203"/>
    </location>
</feature>
<feature type="compositionally biased region" description="Low complexity" evidence="2">
    <location>
        <begin position="233"/>
        <end position="243"/>
    </location>
</feature>
<feature type="compositionally biased region" description="Basic and acidic residues" evidence="2">
    <location>
        <begin position="367"/>
        <end position="383"/>
    </location>
</feature>
<feature type="compositionally biased region" description="Polar residues" evidence="2">
    <location>
        <begin position="385"/>
        <end position="402"/>
    </location>
</feature>
<feature type="compositionally biased region" description="Polar residues" evidence="2">
    <location>
        <begin position="409"/>
        <end position="418"/>
    </location>
</feature>
<feature type="compositionally biased region" description="Basic and acidic residues" evidence="2">
    <location>
        <begin position="422"/>
        <end position="432"/>
    </location>
</feature>
<feature type="compositionally biased region" description="Low complexity" evidence="2">
    <location>
        <begin position="443"/>
        <end position="457"/>
    </location>
</feature>
<comment type="function">
    <text evidence="1">E3 ubiquitin-protein ligase required for accumulation of repair proteins to sites of DNA damage. Acts with ube2n/ubc13 to amplify the rnf8-dependent histone ubiquitination. Recruited to sites of DNA damage at double-strand breaks (DSBs) by binding to ubiquitinated histone H2A and ubiquitinates histone H2A and H2AX, leading to amplify the rnf8-dependent H2A ubiquitination and promoting the formation of 'Lys-63'-linked ubiquitin conjugates. This leads to concentrate ubiquitinated histones H2A and H2AX at DNA lesions. Catalyzes monoubiquitination of 'Lys-13' and 'Lys-15' of nucleosomal histone H2A (H2AK13Ub and H2AK15Ub, respectively).</text>
</comment>
<comment type="catalytic activity">
    <reaction evidence="1">
        <text>S-ubiquitinyl-[E2 ubiquitin-conjugating enzyme]-L-cysteine + [acceptor protein]-L-lysine = [E2 ubiquitin-conjugating enzyme]-L-cysteine + N(6)-ubiquitinyl-[acceptor protein]-L-lysine.</text>
        <dbReference type="EC" id="2.3.2.27"/>
    </reaction>
</comment>
<comment type="pathway">
    <text evidence="1">Protein modification; protein ubiquitination.</text>
</comment>
<comment type="subunit">
    <text evidence="1">Monomer.</text>
</comment>
<comment type="subcellular location">
    <subcellularLocation>
        <location evidence="1">Nucleus</location>
    </subcellularLocation>
    <text evidence="1">Localizes to double-strand breaks (DSBs) sites of DNA damage.</text>
</comment>
<comment type="domain">
    <text evidence="1">The MIU motif (motif interacting with ubiquitin) mediates the interaction with both 'Lys-48'- and 'Lys-63'-linked ubiquitin chains. The UMI motif mediates interaction with ubiquitin with a preference for 'Lys-63'-linked ubiquitin. The specificity for different types of ubiquitin is mediated by juxtaposition of ubiquitin-binding motifs (MIU and UMI motifs) with LR motifs (LRMs).</text>
</comment>
<comment type="similarity">
    <text evidence="1">Belongs to the RNF168 family.</text>
</comment>
<comment type="caution">
    <text evidence="3 4">There is no annotated ortholog of the vertebrate gene BRCA1 in the current zebrafish genome (PubMed:23594743). Therefore, mentions of brca1 in relevant curated zebrafish entries have been removed. However some complexes, conserved widely across species, have BRCA1 in their name and so have been left unchanged.</text>
</comment>